<protein>
    <recommendedName>
        <fullName evidence="3">Bark leucoagglutinin</fullName>
    </recommendedName>
    <alternativeName>
        <fullName evidence="4">Bark leukoagglutinin</fullName>
    </alternativeName>
</protein>
<proteinExistence type="evidence at transcript level"/>
<name>MALB_MAAAM</name>
<accession>P93248</accession>
<organism>
    <name type="scientific">Maackia amurensis</name>
    <name type="common">Amur maackia</name>
    <dbReference type="NCBI Taxonomy" id="37501"/>
    <lineage>
        <taxon>Eukaryota</taxon>
        <taxon>Viridiplantae</taxon>
        <taxon>Streptophyta</taxon>
        <taxon>Embryophyta</taxon>
        <taxon>Tracheophyta</taxon>
        <taxon>Spermatophyta</taxon>
        <taxon>Magnoliopsida</taxon>
        <taxon>eudicotyledons</taxon>
        <taxon>Gunneridae</taxon>
        <taxon>Pentapetalae</taxon>
        <taxon>rosids</taxon>
        <taxon>fabids</taxon>
        <taxon>Fabales</taxon>
        <taxon>Fabaceae</taxon>
        <taxon>Papilionoideae</taxon>
        <taxon>50 kb inversion clade</taxon>
        <taxon>genistoids sensu lato</taxon>
        <taxon>core genistoids</taxon>
        <taxon>Sophoreae</taxon>
        <taxon>Maackia</taxon>
    </lineage>
</organism>
<comment type="function">
    <text evidence="5">Sialic acid-binding lectin specifically recognizing the trisaccharide sequence Neu5Ac/Gc-alpha-2,3-Gal-beta-1,4-GlcNAc/Glc.</text>
</comment>
<comment type="similarity">
    <text evidence="4">Belongs to the leguminous lectin family.</text>
</comment>
<evidence type="ECO:0000250" key="1">
    <source>
        <dbReference type="UniProtKB" id="P0DKL3"/>
    </source>
</evidence>
<evidence type="ECO:0000255" key="2">
    <source>
        <dbReference type="PROSITE-ProRule" id="PRU00498"/>
    </source>
</evidence>
<evidence type="ECO:0000303" key="3">
    <source>
    </source>
</evidence>
<evidence type="ECO:0000305" key="4"/>
<evidence type="ECO:0000305" key="5">
    <source>
    </source>
</evidence>
<dbReference type="EMBL" id="U65010">
    <property type="protein sequence ID" value="AAB39934.1"/>
    <property type="molecule type" value="mRNA"/>
</dbReference>
<dbReference type="SMR" id="P93248"/>
<dbReference type="GlyCosmos" id="P93248">
    <property type="glycosylation" value="4 sites, No reported glycans"/>
</dbReference>
<dbReference type="EvolutionaryTrace" id="P93248"/>
<dbReference type="GO" id="GO:0030246">
    <property type="term" value="F:carbohydrate binding"/>
    <property type="evidence" value="ECO:0007669"/>
    <property type="project" value="UniProtKB-KW"/>
</dbReference>
<dbReference type="GO" id="GO:0046872">
    <property type="term" value="F:metal ion binding"/>
    <property type="evidence" value="ECO:0007669"/>
    <property type="project" value="UniProtKB-KW"/>
</dbReference>
<dbReference type="CDD" id="cd06899">
    <property type="entry name" value="lectin_legume_LecRK_Arcelin_ConA"/>
    <property type="match status" value="1"/>
</dbReference>
<dbReference type="Gene3D" id="2.60.120.200">
    <property type="match status" value="1"/>
</dbReference>
<dbReference type="InterPro" id="IPR013320">
    <property type="entry name" value="ConA-like_dom_sf"/>
</dbReference>
<dbReference type="InterPro" id="IPR016363">
    <property type="entry name" value="L-lectin"/>
</dbReference>
<dbReference type="InterPro" id="IPR000985">
    <property type="entry name" value="Lectin_LegA_CS"/>
</dbReference>
<dbReference type="InterPro" id="IPR019825">
    <property type="entry name" value="Lectin_legB_Mn/Ca_BS"/>
</dbReference>
<dbReference type="InterPro" id="IPR001220">
    <property type="entry name" value="Legume_lectin_dom"/>
</dbReference>
<dbReference type="InterPro" id="IPR050258">
    <property type="entry name" value="Leguminous_Lectin"/>
</dbReference>
<dbReference type="PANTHER" id="PTHR32401">
    <property type="entry name" value="CONCANAVALIN A-LIKE LECTIN FAMILY PROTEIN"/>
    <property type="match status" value="1"/>
</dbReference>
<dbReference type="PANTHER" id="PTHR32401:SF45">
    <property type="entry name" value="LECTIN"/>
    <property type="match status" value="1"/>
</dbReference>
<dbReference type="Pfam" id="PF00139">
    <property type="entry name" value="Lectin_legB"/>
    <property type="match status" value="1"/>
</dbReference>
<dbReference type="PIRSF" id="PIRSF002690">
    <property type="entry name" value="L-type_lectin_plant"/>
    <property type="match status" value="1"/>
</dbReference>
<dbReference type="SUPFAM" id="SSF49899">
    <property type="entry name" value="Concanavalin A-like lectins/glucanases"/>
    <property type="match status" value="1"/>
</dbReference>
<dbReference type="PROSITE" id="PS00308">
    <property type="entry name" value="LECTIN_LEGUME_ALPHA"/>
    <property type="match status" value="1"/>
</dbReference>
<dbReference type="PROSITE" id="PS00307">
    <property type="entry name" value="LECTIN_LEGUME_BETA"/>
    <property type="match status" value="1"/>
</dbReference>
<keyword id="KW-0106">Calcium</keyword>
<keyword id="KW-0325">Glycoprotein</keyword>
<keyword id="KW-0430">Lectin</keyword>
<keyword id="KW-0464">Manganese</keyword>
<keyword id="KW-0479">Metal-binding</keyword>
<keyword id="KW-0732">Signal</keyword>
<gene>
    <name evidence="3" type="primary">MAL</name>
</gene>
<reference key="1">
    <citation type="journal article" date="1997" name="Glycoconj. J.">
        <title>Isolation, characterization and molecular cloning of the bark lectins from Maackia amurensis.</title>
        <authorList>
            <person name="Van Damme E.J."/>
            <person name="Van Leuven F."/>
            <person name="Peumans W.J."/>
        </authorList>
    </citation>
    <scope>NUCLEOTIDE SEQUENCE [MRNA]</scope>
    <scope>FUNCTION</scope>
    <source>
        <tissue>Bark</tissue>
    </source>
</reference>
<feature type="signal peptide" evidence="1">
    <location>
        <begin position="1"/>
        <end position="28"/>
    </location>
</feature>
<feature type="chain" id="PRO_5004161572" description="Bark leucoagglutinin">
    <location>
        <begin position="29"/>
        <end position="286"/>
    </location>
</feature>
<feature type="propeptide" id="PRO_0000438712" description="Removed in mature form" evidence="1">
    <location>
        <begin position="278"/>
        <end position="286"/>
    </location>
</feature>
<feature type="binding site" evidence="1">
    <location>
        <position position="73"/>
    </location>
    <ligand>
        <name>N-acetyl-alpha-neuraminyl-(2-&gt;3)-beta-D-galactosyl-(1-&gt;4)-beta-D-glucose</name>
        <dbReference type="ChEBI" id="CHEBI:232876"/>
    </ligand>
</feature>
<feature type="binding site" evidence="1">
    <location>
        <position position="115"/>
    </location>
    <ligand>
        <name>N-acetyl-alpha-neuraminyl-(2-&gt;3)-beta-D-galactosyl-(1-&gt;4)-beta-D-glucose</name>
        <dbReference type="ChEBI" id="CHEBI:232876"/>
    </ligand>
</feature>
<feature type="binding site" evidence="1">
    <location>
        <position position="135"/>
    </location>
    <ligand>
        <name>N-acetyl-alpha-neuraminyl-(2-&gt;3)-beta-D-galactosyl-(1-&gt;4)-beta-D-glucose</name>
        <dbReference type="ChEBI" id="CHEBI:232876"/>
    </ligand>
</feature>
<feature type="binding site" evidence="1">
    <location>
        <position position="155"/>
    </location>
    <ligand>
        <name>Mn(2+)</name>
        <dbReference type="ChEBI" id="CHEBI:29035"/>
    </ligand>
</feature>
<feature type="binding site" evidence="1">
    <location>
        <position position="157"/>
    </location>
    <ligand>
        <name>Ca(2+)</name>
        <dbReference type="ChEBI" id="CHEBI:29108"/>
    </ligand>
</feature>
<feature type="binding site" evidence="1">
    <location>
        <position position="157"/>
    </location>
    <ligand>
        <name>Mn(2+)</name>
        <dbReference type="ChEBI" id="CHEBI:29035"/>
    </ligand>
</feature>
<feature type="binding site" evidence="1">
    <location>
        <position position="159"/>
    </location>
    <ligand>
        <name>Ca(2+)</name>
        <dbReference type="ChEBI" id="CHEBI:29108"/>
    </ligand>
</feature>
<feature type="binding site" evidence="1">
    <location>
        <position position="159"/>
    </location>
    <ligand>
        <name>N-acetyl-alpha-neuraminyl-(2-&gt;3)-beta-D-galactosyl-(1-&gt;4)-beta-D-glucose</name>
        <dbReference type="ChEBI" id="CHEBI:232876"/>
    </ligand>
</feature>
<feature type="binding site" evidence="1">
    <location>
        <position position="165"/>
    </location>
    <ligand>
        <name>Ca(2+)</name>
        <dbReference type="ChEBI" id="CHEBI:29108"/>
    </ligand>
</feature>
<feature type="binding site" evidence="1">
    <location>
        <position position="165"/>
    </location>
    <ligand>
        <name>N-acetyl-alpha-neuraminyl-(2-&gt;3)-beta-D-galactosyl-(1-&gt;4)-beta-D-glucose</name>
        <dbReference type="ChEBI" id="CHEBI:232876"/>
    </ligand>
</feature>
<feature type="binding site" evidence="1">
    <location>
        <position position="168"/>
    </location>
    <ligand>
        <name>Ca(2+)</name>
        <dbReference type="ChEBI" id="CHEBI:29108"/>
    </ligand>
</feature>
<feature type="binding site" evidence="1">
    <location>
        <position position="168"/>
    </location>
    <ligand>
        <name>Mn(2+)</name>
        <dbReference type="ChEBI" id="CHEBI:29035"/>
    </ligand>
</feature>
<feature type="binding site" evidence="1">
    <location>
        <position position="173"/>
    </location>
    <ligand>
        <name>Mn(2+)</name>
        <dbReference type="ChEBI" id="CHEBI:29035"/>
    </ligand>
</feature>
<feature type="glycosylation site" description="N-linked (GlcNAc...) asparagine" evidence="2">
    <location>
        <position position="89"/>
    </location>
</feature>
<feature type="glycosylation site" description="N-linked (GlcNAc...) asparagine" evidence="2">
    <location>
        <position position="141"/>
    </location>
</feature>
<feature type="glycosylation site" description="N-linked (GlcNAc...) asparagine" evidence="2">
    <location>
        <position position="207"/>
    </location>
</feature>
<feature type="glycosylation site" description="N-linked (GlcNAc...) asparagine" evidence="2">
    <location>
        <position position="219"/>
    </location>
</feature>
<feature type="non-terminal residue" evidence="4">
    <location>
        <position position="1"/>
    </location>
</feature>
<sequence>ATSNSKPTQVLLATFLTFFFLLLNNVNSSDELSFTINNFVPNEADLLFQGEASVSSTGVLQLTRVENGQPQQYSVGRALYAAPVRIWDNTTGSVASFSTSFTFVVKAPNPTITSDGLAFFLAPPDSQIPSGRVSKYLGLFNNSNSDSSNQIVAVEFDTYFGHSYDPWDPNYRHIGIDVNGIESIKTVQWDWINGGVAFATITYLAPNKTLIASLVYPSNQTSFIVAASVDLKEILPEWVRVGFSAATGYPTQVETHDVLSWSFTSTLEANSDAATENNVHIARYTA</sequence>